<name>MCES_DEBHA</name>
<dbReference type="EC" id="2.1.1.56" evidence="2"/>
<dbReference type="EMBL" id="CR382138">
    <property type="protein sequence ID" value="CAG88922.2"/>
    <property type="molecule type" value="Genomic_DNA"/>
</dbReference>
<dbReference type="RefSeq" id="XP_460598.2">
    <property type="nucleotide sequence ID" value="XM_460598.2"/>
</dbReference>
<dbReference type="SMR" id="Q6BMH4"/>
<dbReference type="FunCoup" id="Q6BMH4">
    <property type="interactions" value="1072"/>
</dbReference>
<dbReference type="STRING" id="284592.Q6BMH4"/>
<dbReference type="GeneID" id="2903540"/>
<dbReference type="KEGG" id="dha:DEHA2F05434g"/>
<dbReference type="VEuPathDB" id="FungiDB:DEHA2F05434g"/>
<dbReference type="eggNOG" id="KOG1975">
    <property type="taxonomic scope" value="Eukaryota"/>
</dbReference>
<dbReference type="HOGENOM" id="CLU_020346_2_0_1"/>
<dbReference type="InParanoid" id="Q6BMH4"/>
<dbReference type="OMA" id="KPFLEVW"/>
<dbReference type="OrthoDB" id="10248867at2759"/>
<dbReference type="Proteomes" id="UP000000599">
    <property type="component" value="Chromosome F"/>
</dbReference>
<dbReference type="GO" id="GO:0005829">
    <property type="term" value="C:cytosol"/>
    <property type="evidence" value="ECO:0007669"/>
    <property type="project" value="EnsemblFungi"/>
</dbReference>
<dbReference type="GO" id="GO:0005634">
    <property type="term" value="C:nucleus"/>
    <property type="evidence" value="ECO:0007669"/>
    <property type="project" value="UniProtKB-SubCell"/>
</dbReference>
<dbReference type="GO" id="GO:0004482">
    <property type="term" value="F:mRNA 5'-cap (guanine-N7-)-methyltransferase activity"/>
    <property type="evidence" value="ECO:0007669"/>
    <property type="project" value="UniProtKB-EC"/>
</dbReference>
<dbReference type="GO" id="GO:0003723">
    <property type="term" value="F:RNA binding"/>
    <property type="evidence" value="ECO:0007669"/>
    <property type="project" value="UniProtKB-KW"/>
</dbReference>
<dbReference type="FunFam" id="3.40.50.150:FF:000280">
    <property type="entry name" value="mRNA cap guanine-N7 methyltransferase"/>
    <property type="match status" value="1"/>
</dbReference>
<dbReference type="Gene3D" id="3.40.50.150">
    <property type="entry name" value="Vaccinia Virus protein VP39"/>
    <property type="match status" value="1"/>
</dbReference>
<dbReference type="InterPro" id="IPR004971">
    <property type="entry name" value="mRNA_G-N7_MeTrfase_dom"/>
</dbReference>
<dbReference type="InterPro" id="IPR016899">
    <property type="entry name" value="mRNA_G-N7_MeTrfase_euk"/>
</dbReference>
<dbReference type="InterPro" id="IPR039753">
    <property type="entry name" value="RG7MT1"/>
</dbReference>
<dbReference type="InterPro" id="IPR029063">
    <property type="entry name" value="SAM-dependent_MTases_sf"/>
</dbReference>
<dbReference type="PANTHER" id="PTHR12189:SF2">
    <property type="entry name" value="MRNA CAP GUANINE-N7 METHYLTRANSFERASE"/>
    <property type="match status" value="1"/>
</dbReference>
<dbReference type="PANTHER" id="PTHR12189">
    <property type="entry name" value="MRNA GUANINE-7- METHYLTRANSFERASE"/>
    <property type="match status" value="1"/>
</dbReference>
<dbReference type="Pfam" id="PF03291">
    <property type="entry name" value="mRNA_G-N7_MeTrfase"/>
    <property type="match status" value="1"/>
</dbReference>
<dbReference type="PIRSF" id="PIRSF028762">
    <property type="entry name" value="ABD1"/>
    <property type="match status" value="1"/>
</dbReference>
<dbReference type="SUPFAM" id="SSF53335">
    <property type="entry name" value="S-adenosyl-L-methionine-dependent methyltransferases"/>
    <property type="match status" value="1"/>
</dbReference>
<dbReference type="PROSITE" id="PS51562">
    <property type="entry name" value="RNA_CAP0_MT"/>
    <property type="match status" value="1"/>
</dbReference>
<accession>Q6BMH4</accession>
<sequence length="524" mass="59331">MSDKEAGVASSLGSNSPINKDEVDVKNTEEHSKQESKSDINKPPLKKIKADDGIDISDSFSRRENKGNNKVISSVYNDENKKTPAWMKSKTTDKYDKYGSRSTPIATPTAPVNNPDERYSKYMTNSVNSNDRVRRPPTETTSSQYDKKRAHDEAEDDVVAPYSNLAVANPSSNLYQTFQSHINNREGKDINSIVRSHYNQRTQQSKFQGSRTKSPIYKLRNFNNAIKYILLGNWVKPNPDSNRPTVILDLCCGKGGDLNKCEFVSVDQYIGIDISDASIKEAFSRYSRNKARFIPQTAESKKERDTRRYNFEACFATGDCFSSSIPEILEPNFPGIIDGLFPVDCVSLQFAMHYAFETEEKVHQLLTNVTKSLRAGGTLIGTIPSSDFIRDKIVNRAFIDQENRKFGNDLYSVTFHKDPPDEGVFRPPFGNGYNYSLKDAIDDVPEYVVPFEVFRGLCEEYGLVLKYKKNFIDIFNQEIPKYFSKLNKNLIEGMKRSDGKYGAEGLEKEAVGFYIGFVFEKLGN</sequence>
<comment type="function">
    <text evidence="1">Responsible for methylating the 5'-cap structure of mRNAs.</text>
</comment>
<comment type="catalytic activity">
    <reaction evidence="2 3">
        <text>a 5'-end (5'-triphosphoguanosine)-ribonucleoside in mRNA + S-adenosyl-L-methionine = a 5'-end (N(7)-methyl 5'-triphosphoguanosine)-ribonucleoside in mRNA + S-adenosyl-L-homocysteine</text>
        <dbReference type="Rhea" id="RHEA:67008"/>
        <dbReference type="Rhea" id="RHEA-COMP:17166"/>
        <dbReference type="Rhea" id="RHEA-COMP:17167"/>
        <dbReference type="ChEBI" id="CHEBI:57856"/>
        <dbReference type="ChEBI" id="CHEBI:59789"/>
        <dbReference type="ChEBI" id="CHEBI:156461"/>
        <dbReference type="ChEBI" id="CHEBI:167617"/>
        <dbReference type="EC" id="2.1.1.56"/>
    </reaction>
</comment>
<comment type="subcellular location">
    <subcellularLocation>
        <location evidence="1">Nucleus</location>
    </subcellularLocation>
</comment>
<comment type="similarity">
    <text evidence="3">Belongs to the class I-like SAM-binding methyltransferase superfamily. mRNA cap 0 methyltransferase family.</text>
</comment>
<proteinExistence type="inferred from homology"/>
<gene>
    <name type="primary">ABD1</name>
    <name type="ordered locus">DEHA2F05434g</name>
</gene>
<organism>
    <name type="scientific">Debaryomyces hansenii (strain ATCC 36239 / CBS 767 / BCRC 21394 / JCM 1990 / NBRC 0083 / IGC 2968)</name>
    <name type="common">Yeast</name>
    <name type="synonym">Torulaspora hansenii</name>
    <dbReference type="NCBI Taxonomy" id="284592"/>
    <lineage>
        <taxon>Eukaryota</taxon>
        <taxon>Fungi</taxon>
        <taxon>Dikarya</taxon>
        <taxon>Ascomycota</taxon>
        <taxon>Saccharomycotina</taxon>
        <taxon>Pichiomycetes</taxon>
        <taxon>Debaryomycetaceae</taxon>
        <taxon>Debaryomyces</taxon>
    </lineage>
</organism>
<protein>
    <recommendedName>
        <fullName>mRNA cap guanine-N(7) methyltransferase</fullName>
        <ecNumber evidence="2">2.1.1.56</ecNumber>
    </recommendedName>
    <alternativeName>
        <fullName>mRNA (guanine-N(7))-methyltransferase</fullName>
    </alternativeName>
    <alternativeName>
        <fullName>mRNA cap methyltransferase</fullName>
    </alternativeName>
</protein>
<keyword id="KW-0489">Methyltransferase</keyword>
<keyword id="KW-0506">mRNA capping</keyword>
<keyword id="KW-0507">mRNA processing</keyword>
<keyword id="KW-0539">Nucleus</keyword>
<keyword id="KW-1185">Reference proteome</keyword>
<keyword id="KW-0694">RNA-binding</keyword>
<keyword id="KW-0949">S-adenosyl-L-methionine</keyword>
<keyword id="KW-0808">Transferase</keyword>
<feature type="chain" id="PRO_0000303908" description="mRNA cap guanine-N(7) methyltransferase">
    <location>
        <begin position="1"/>
        <end position="524"/>
    </location>
</feature>
<feature type="domain" description="mRNA cap 0 methyltransferase" evidence="3">
    <location>
        <begin position="214"/>
        <end position="522"/>
    </location>
</feature>
<feature type="region of interest" description="Disordered" evidence="4">
    <location>
        <begin position="1"/>
        <end position="155"/>
    </location>
</feature>
<feature type="compositionally biased region" description="Basic and acidic residues" evidence="4">
    <location>
        <begin position="19"/>
        <end position="40"/>
    </location>
</feature>
<feature type="compositionally biased region" description="Polar residues" evidence="4">
    <location>
        <begin position="68"/>
        <end position="77"/>
    </location>
</feature>
<feature type="compositionally biased region" description="Basic and acidic residues" evidence="4">
    <location>
        <begin position="90"/>
        <end position="99"/>
    </location>
</feature>
<feature type="compositionally biased region" description="Polar residues" evidence="4">
    <location>
        <begin position="100"/>
        <end position="112"/>
    </location>
</feature>
<feature type="binding site" evidence="3">
    <location>
        <begin position="223"/>
        <end position="224"/>
    </location>
    <ligand>
        <name>mRNA</name>
        <dbReference type="ChEBI" id="CHEBI:33699"/>
    </ligand>
    <ligandPart>
        <name>mRNA cap</name>
    </ligandPart>
</feature>
<feature type="binding site" evidence="3">
    <location>
        <position position="227"/>
    </location>
    <ligand>
        <name>S-adenosyl-L-methionine</name>
        <dbReference type="ChEBI" id="CHEBI:59789"/>
    </ligand>
</feature>
<feature type="binding site" evidence="3">
    <location>
        <position position="251"/>
    </location>
    <ligand>
        <name>S-adenosyl-L-methionine</name>
        <dbReference type="ChEBI" id="CHEBI:59789"/>
    </ligand>
</feature>
<feature type="binding site" evidence="3">
    <location>
        <position position="273"/>
    </location>
    <ligand>
        <name>S-adenosyl-L-methionine</name>
        <dbReference type="ChEBI" id="CHEBI:59789"/>
    </ligand>
</feature>
<feature type="binding site" evidence="2">
    <location>
        <position position="319"/>
    </location>
    <ligand>
        <name>S-adenosyl-L-methionine</name>
        <dbReference type="ChEBI" id="CHEBI:59789"/>
    </ligand>
</feature>
<feature type="binding site" evidence="2">
    <location>
        <position position="349"/>
    </location>
    <ligand>
        <name>S-adenosyl-L-methionine</name>
        <dbReference type="ChEBI" id="CHEBI:59789"/>
    </ligand>
</feature>
<feature type="binding site" evidence="2">
    <location>
        <position position="354"/>
    </location>
    <ligand>
        <name>S-adenosyl-L-methionine</name>
        <dbReference type="ChEBI" id="CHEBI:59789"/>
    </ligand>
</feature>
<feature type="site" description="mRNA cap binding" evidence="3">
    <location>
        <position position="254"/>
    </location>
</feature>
<feature type="site" description="mRNA cap binding" evidence="3">
    <location>
        <position position="260"/>
    </location>
</feature>
<feature type="site" description="mRNA cap binding" evidence="3">
    <location>
        <position position="285"/>
    </location>
</feature>
<feature type="site" description="mRNA cap binding" evidence="3">
    <location>
        <position position="353"/>
    </location>
</feature>
<feature type="site" description="mRNA cap binding" evidence="3">
    <location>
        <position position="446"/>
    </location>
</feature>
<feature type="site" description="mRNA cap binding" evidence="3">
    <location>
        <position position="514"/>
    </location>
</feature>
<evidence type="ECO:0000250" key="1"/>
<evidence type="ECO:0000250" key="2">
    <source>
        <dbReference type="UniProtKB" id="O43148"/>
    </source>
</evidence>
<evidence type="ECO:0000255" key="3">
    <source>
        <dbReference type="PROSITE-ProRule" id="PRU00895"/>
    </source>
</evidence>
<evidence type="ECO:0000256" key="4">
    <source>
        <dbReference type="SAM" id="MobiDB-lite"/>
    </source>
</evidence>
<reference key="1">
    <citation type="journal article" date="2004" name="Nature">
        <title>Genome evolution in yeasts.</title>
        <authorList>
            <person name="Dujon B."/>
            <person name="Sherman D."/>
            <person name="Fischer G."/>
            <person name="Durrens P."/>
            <person name="Casaregola S."/>
            <person name="Lafontaine I."/>
            <person name="de Montigny J."/>
            <person name="Marck C."/>
            <person name="Neuveglise C."/>
            <person name="Talla E."/>
            <person name="Goffard N."/>
            <person name="Frangeul L."/>
            <person name="Aigle M."/>
            <person name="Anthouard V."/>
            <person name="Babour A."/>
            <person name="Barbe V."/>
            <person name="Barnay S."/>
            <person name="Blanchin S."/>
            <person name="Beckerich J.-M."/>
            <person name="Beyne E."/>
            <person name="Bleykasten C."/>
            <person name="Boisrame A."/>
            <person name="Boyer J."/>
            <person name="Cattolico L."/>
            <person name="Confanioleri F."/>
            <person name="de Daruvar A."/>
            <person name="Despons L."/>
            <person name="Fabre E."/>
            <person name="Fairhead C."/>
            <person name="Ferry-Dumazet H."/>
            <person name="Groppi A."/>
            <person name="Hantraye F."/>
            <person name="Hennequin C."/>
            <person name="Jauniaux N."/>
            <person name="Joyet P."/>
            <person name="Kachouri R."/>
            <person name="Kerrest A."/>
            <person name="Koszul R."/>
            <person name="Lemaire M."/>
            <person name="Lesur I."/>
            <person name="Ma L."/>
            <person name="Muller H."/>
            <person name="Nicaud J.-M."/>
            <person name="Nikolski M."/>
            <person name="Oztas S."/>
            <person name="Ozier-Kalogeropoulos O."/>
            <person name="Pellenz S."/>
            <person name="Potier S."/>
            <person name="Richard G.-F."/>
            <person name="Straub M.-L."/>
            <person name="Suleau A."/>
            <person name="Swennen D."/>
            <person name="Tekaia F."/>
            <person name="Wesolowski-Louvel M."/>
            <person name="Westhof E."/>
            <person name="Wirth B."/>
            <person name="Zeniou-Meyer M."/>
            <person name="Zivanovic Y."/>
            <person name="Bolotin-Fukuhara M."/>
            <person name="Thierry A."/>
            <person name="Bouchier C."/>
            <person name="Caudron B."/>
            <person name="Scarpelli C."/>
            <person name="Gaillardin C."/>
            <person name="Weissenbach J."/>
            <person name="Wincker P."/>
            <person name="Souciet J.-L."/>
        </authorList>
    </citation>
    <scope>NUCLEOTIDE SEQUENCE [LARGE SCALE GENOMIC DNA]</scope>
    <source>
        <strain>ATCC 36239 / CBS 767 / BCRC 21394 / JCM 1990 / NBRC 0083 / IGC 2968</strain>
    </source>
</reference>